<organism>
    <name type="scientific">Oryza sativa subsp. japonica</name>
    <name type="common">Rice</name>
    <dbReference type="NCBI Taxonomy" id="39947"/>
    <lineage>
        <taxon>Eukaryota</taxon>
        <taxon>Viridiplantae</taxon>
        <taxon>Streptophyta</taxon>
        <taxon>Embryophyta</taxon>
        <taxon>Tracheophyta</taxon>
        <taxon>Spermatophyta</taxon>
        <taxon>Magnoliopsida</taxon>
        <taxon>Liliopsida</taxon>
        <taxon>Poales</taxon>
        <taxon>Poaceae</taxon>
        <taxon>BOP clade</taxon>
        <taxon>Oryzoideae</taxon>
        <taxon>Oryzeae</taxon>
        <taxon>Oryzinae</taxon>
        <taxon>Oryza</taxon>
        <taxon>Oryza sativa</taxon>
    </lineage>
</organism>
<feature type="chain" id="PRO_0000290044" description="Large ribosomal subunit protein uL16c">
    <location>
        <begin position="1"/>
        <end position="136"/>
    </location>
</feature>
<protein>
    <recommendedName>
        <fullName evidence="1">Large ribosomal subunit protein uL16c</fullName>
    </recommendedName>
    <alternativeName>
        <fullName evidence="2">50S ribosomal protein L16, chloroplastic</fullName>
    </alternativeName>
</protein>
<sequence>MLSPKRTRFRKQHRGRMKGKSYRGNCICFGRYALQALEPTWITARQIEAGRRAMTRYARRGGKIWVRIFPDKPVTIRPTETRMGSGKGSPEYWVAVVKPGRILYEMGGVSETVARAAISIAASKMPIRSQFLRLEI</sequence>
<gene>
    <name evidence="1" type="primary">rpl16</name>
    <name type="ordered locus">LOC_Osp1g00720</name>
    <name type="ORF">Nip111</name>
</gene>
<keyword id="KW-0150">Chloroplast</keyword>
<keyword id="KW-0934">Plastid</keyword>
<keyword id="KW-1185">Reference proteome</keyword>
<keyword id="KW-0687">Ribonucleoprotein</keyword>
<keyword id="KW-0689">Ribosomal protein</keyword>
<dbReference type="EMBL" id="X15901">
    <property type="protein sequence ID" value="CAA33933.1"/>
    <property type="molecule type" value="Genomic_DNA"/>
</dbReference>
<dbReference type="EMBL" id="AY522330">
    <property type="protein sequence ID" value="AAS46146.1"/>
    <property type="status" value="ALT_SEQ"/>
    <property type="molecule type" value="Genomic_DNA"/>
</dbReference>
<dbReference type="PIR" id="JQ0264">
    <property type="entry name" value="R5RZ16"/>
</dbReference>
<dbReference type="RefSeq" id="NP_039423.1">
    <property type="nucleotide sequence ID" value="NC_001320.1"/>
</dbReference>
<dbReference type="SMR" id="P0C443"/>
<dbReference type="BioGRID" id="792791">
    <property type="interactions" value="1"/>
</dbReference>
<dbReference type="FunCoup" id="P0C443">
    <property type="interactions" value="982"/>
</dbReference>
<dbReference type="STRING" id="39947.P0C443"/>
<dbReference type="PaxDb" id="39947-P0C443"/>
<dbReference type="GeneID" id="3131423"/>
<dbReference type="KEGG" id="dosa:rpl16"/>
<dbReference type="KEGG" id="osa:3131423"/>
<dbReference type="InParanoid" id="P0C443"/>
<dbReference type="OrthoDB" id="34872at2759"/>
<dbReference type="Proteomes" id="UP000059680">
    <property type="component" value="Chloroplast"/>
</dbReference>
<dbReference type="GO" id="GO:0009507">
    <property type="term" value="C:chloroplast"/>
    <property type="evidence" value="ECO:0007669"/>
    <property type="project" value="UniProtKB-SubCell"/>
</dbReference>
<dbReference type="GO" id="GO:0005762">
    <property type="term" value="C:mitochondrial large ribosomal subunit"/>
    <property type="evidence" value="ECO:0000318"/>
    <property type="project" value="GO_Central"/>
</dbReference>
<dbReference type="GO" id="GO:0009536">
    <property type="term" value="C:plastid"/>
    <property type="evidence" value="ECO:0000305"/>
    <property type="project" value="Gramene"/>
</dbReference>
<dbReference type="GO" id="GO:0019843">
    <property type="term" value="F:rRNA binding"/>
    <property type="evidence" value="ECO:0000318"/>
    <property type="project" value="GO_Central"/>
</dbReference>
<dbReference type="GO" id="GO:0003735">
    <property type="term" value="F:structural constituent of ribosome"/>
    <property type="evidence" value="ECO:0000318"/>
    <property type="project" value="GO_Central"/>
</dbReference>
<dbReference type="GO" id="GO:0032543">
    <property type="term" value="P:mitochondrial translation"/>
    <property type="evidence" value="ECO:0000318"/>
    <property type="project" value="GO_Central"/>
</dbReference>
<dbReference type="CDD" id="cd01433">
    <property type="entry name" value="Ribosomal_L16_L10e"/>
    <property type="match status" value="1"/>
</dbReference>
<dbReference type="FunFam" id="3.90.1170.10:FF:000001">
    <property type="entry name" value="50S ribosomal protein L16"/>
    <property type="match status" value="1"/>
</dbReference>
<dbReference type="Gene3D" id="3.90.1170.10">
    <property type="entry name" value="Ribosomal protein L10e/L16"/>
    <property type="match status" value="1"/>
</dbReference>
<dbReference type="HAMAP" id="MF_01342">
    <property type="entry name" value="Ribosomal_uL16"/>
    <property type="match status" value="1"/>
</dbReference>
<dbReference type="InterPro" id="IPR047873">
    <property type="entry name" value="Ribosomal_uL16"/>
</dbReference>
<dbReference type="InterPro" id="IPR000114">
    <property type="entry name" value="Ribosomal_uL16_bact-type"/>
</dbReference>
<dbReference type="InterPro" id="IPR020798">
    <property type="entry name" value="Ribosomal_uL16_CS"/>
</dbReference>
<dbReference type="InterPro" id="IPR016180">
    <property type="entry name" value="Ribosomal_uL16_dom"/>
</dbReference>
<dbReference type="InterPro" id="IPR036920">
    <property type="entry name" value="Ribosomal_uL16_sf"/>
</dbReference>
<dbReference type="NCBIfam" id="TIGR01164">
    <property type="entry name" value="rplP_bact"/>
    <property type="match status" value="1"/>
</dbReference>
<dbReference type="PANTHER" id="PTHR12220">
    <property type="entry name" value="50S/60S RIBOSOMAL PROTEIN L16"/>
    <property type="match status" value="1"/>
</dbReference>
<dbReference type="PANTHER" id="PTHR12220:SF13">
    <property type="entry name" value="LARGE RIBOSOMAL SUBUNIT PROTEIN UL16M"/>
    <property type="match status" value="1"/>
</dbReference>
<dbReference type="Pfam" id="PF00252">
    <property type="entry name" value="Ribosomal_L16"/>
    <property type="match status" value="1"/>
</dbReference>
<dbReference type="PRINTS" id="PR00060">
    <property type="entry name" value="RIBOSOMALL16"/>
</dbReference>
<dbReference type="SUPFAM" id="SSF54686">
    <property type="entry name" value="Ribosomal protein L16p/L10e"/>
    <property type="match status" value="1"/>
</dbReference>
<dbReference type="PROSITE" id="PS00586">
    <property type="entry name" value="RIBOSOMAL_L16_1"/>
    <property type="match status" value="1"/>
</dbReference>
<dbReference type="PROSITE" id="PS00701">
    <property type="entry name" value="RIBOSOMAL_L16_2"/>
    <property type="match status" value="1"/>
</dbReference>
<proteinExistence type="inferred from homology"/>
<comment type="subunit">
    <text evidence="1">Part of the 50S ribosomal subunit.</text>
</comment>
<comment type="subcellular location">
    <subcellularLocation>
        <location>Plastid</location>
        <location>Chloroplast</location>
    </subcellularLocation>
</comment>
<comment type="similarity">
    <text evidence="1">Belongs to the universal ribosomal protein uL16 family.</text>
</comment>
<comment type="sequence caution" evidence="2">
    <conflict type="erroneous gene model prediction">
        <sequence resource="EMBL-CDS" id="AAS46146"/>
    </conflict>
</comment>
<reference key="1">
    <citation type="journal article" date="1989" name="Mol. Gen. Genet.">
        <title>The complete sequence of the rice (Oryza sativa) chloroplast genome: intermolecular recombination between distinct tRNA genes accounts for a major plastid DNA inversion during the evolution of the cereals.</title>
        <authorList>
            <person name="Hiratsuka J."/>
            <person name="Shimada H."/>
            <person name="Whittier R."/>
            <person name="Ishibashi T."/>
            <person name="Sakamoto M."/>
            <person name="Mori M."/>
            <person name="Kondo C."/>
            <person name="Honji Y."/>
            <person name="Sun C.-R."/>
            <person name="Meng B.-Y."/>
            <person name="Li Y.-Q."/>
            <person name="Kanno A."/>
            <person name="Nishizawa Y."/>
            <person name="Hirai A."/>
            <person name="Shinozaki K."/>
            <person name="Sugiura M."/>
        </authorList>
    </citation>
    <scope>NUCLEOTIDE SEQUENCE [LARGE SCALE GENOMIC DNA]</scope>
    <source>
        <strain>cv. Nipponbare</strain>
    </source>
</reference>
<reference key="2">
    <citation type="journal article" date="2004" name="Plant Physiol.">
        <title>A comparison of rice chloroplast genomes.</title>
        <authorList>
            <person name="Tang J."/>
            <person name="Xia H."/>
            <person name="Cao M."/>
            <person name="Zhang X."/>
            <person name="Zeng W."/>
            <person name="Hu S."/>
            <person name="Tong W."/>
            <person name="Wang J."/>
            <person name="Wang J."/>
            <person name="Yu J."/>
            <person name="Yang H."/>
            <person name="Zhu L."/>
        </authorList>
    </citation>
    <scope>NUCLEOTIDE SEQUENCE [LARGE SCALE GENOMIC DNA]</scope>
    <source>
        <strain>cv. Nipponbare</strain>
    </source>
</reference>
<geneLocation type="chloroplast"/>
<name>RK16_ORYSJ</name>
<accession>P0C443</accession>
<accession>P12138</accession>
<accession>Q6QXS2</accession>
<accession>Q6QY48</accession>
<evidence type="ECO:0000255" key="1">
    <source>
        <dbReference type="HAMAP-Rule" id="MF_01342"/>
    </source>
</evidence>
<evidence type="ECO:0000305" key="2"/>